<organism>
    <name type="scientific">Enterobacter sp. (strain 638)</name>
    <dbReference type="NCBI Taxonomy" id="399742"/>
    <lineage>
        <taxon>Bacteria</taxon>
        <taxon>Pseudomonadati</taxon>
        <taxon>Pseudomonadota</taxon>
        <taxon>Gammaproteobacteria</taxon>
        <taxon>Enterobacterales</taxon>
        <taxon>Enterobacteriaceae</taxon>
        <taxon>Enterobacter</taxon>
    </lineage>
</organism>
<reference key="1">
    <citation type="journal article" date="2010" name="PLoS Genet.">
        <title>Genome sequence of the plant growth promoting endophytic bacterium Enterobacter sp. 638.</title>
        <authorList>
            <person name="Taghavi S."/>
            <person name="van der Lelie D."/>
            <person name="Hoffman A."/>
            <person name="Zhang Y.B."/>
            <person name="Walla M.D."/>
            <person name="Vangronsveld J."/>
            <person name="Newman L."/>
            <person name="Monchy S."/>
        </authorList>
    </citation>
    <scope>NUCLEOTIDE SEQUENCE [LARGE SCALE GENOMIC DNA]</scope>
    <source>
        <strain>638</strain>
    </source>
</reference>
<evidence type="ECO:0000255" key="1">
    <source>
        <dbReference type="HAMAP-Rule" id="MF_00687"/>
    </source>
</evidence>
<keyword id="KW-0413">Isomerase</keyword>
<keyword id="KW-0479">Metal-binding</keyword>
<keyword id="KW-0862">Zinc</keyword>
<accession>A4WE30</accession>
<feature type="chain" id="PRO_1000062002" description="4-deoxy-L-threo-5-hexosulose-uronate ketol-isomerase">
    <location>
        <begin position="1"/>
        <end position="278"/>
    </location>
</feature>
<feature type="binding site" evidence="1">
    <location>
        <position position="196"/>
    </location>
    <ligand>
        <name>Zn(2+)</name>
        <dbReference type="ChEBI" id="CHEBI:29105"/>
    </ligand>
</feature>
<feature type="binding site" evidence="1">
    <location>
        <position position="198"/>
    </location>
    <ligand>
        <name>Zn(2+)</name>
        <dbReference type="ChEBI" id="CHEBI:29105"/>
    </ligand>
</feature>
<feature type="binding site" evidence="1">
    <location>
        <position position="203"/>
    </location>
    <ligand>
        <name>Zn(2+)</name>
        <dbReference type="ChEBI" id="CHEBI:29105"/>
    </ligand>
</feature>
<feature type="binding site" evidence="1">
    <location>
        <position position="245"/>
    </location>
    <ligand>
        <name>Zn(2+)</name>
        <dbReference type="ChEBI" id="CHEBI:29105"/>
    </ligand>
</feature>
<dbReference type="EC" id="5.3.1.17" evidence="1"/>
<dbReference type="EMBL" id="CP000653">
    <property type="protein sequence ID" value="ABP61960.1"/>
    <property type="molecule type" value="Genomic_DNA"/>
</dbReference>
<dbReference type="RefSeq" id="WP_015960288.1">
    <property type="nucleotide sequence ID" value="NC_009436.1"/>
</dbReference>
<dbReference type="SMR" id="A4WE30"/>
<dbReference type="STRING" id="399742.Ent638_3296"/>
<dbReference type="KEGG" id="ent:Ent638_3296"/>
<dbReference type="eggNOG" id="COG3717">
    <property type="taxonomic scope" value="Bacteria"/>
</dbReference>
<dbReference type="HOGENOM" id="CLU_062609_0_0_6"/>
<dbReference type="OrthoDB" id="9770644at2"/>
<dbReference type="UniPathway" id="UPA00545">
    <property type="reaction ID" value="UER00826"/>
</dbReference>
<dbReference type="Proteomes" id="UP000000230">
    <property type="component" value="Chromosome"/>
</dbReference>
<dbReference type="GO" id="GO:0008697">
    <property type="term" value="F:4-deoxy-L-threo-5-hexosulose-uronate ketol-isomerase activity"/>
    <property type="evidence" value="ECO:0007669"/>
    <property type="project" value="UniProtKB-UniRule"/>
</dbReference>
<dbReference type="GO" id="GO:0008270">
    <property type="term" value="F:zinc ion binding"/>
    <property type="evidence" value="ECO:0007669"/>
    <property type="project" value="UniProtKB-UniRule"/>
</dbReference>
<dbReference type="GO" id="GO:0019698">
    <property type="term" value="P:D-galacturonate catabolic process"/>
    <property type="evidence" value="ECO:0007669"/>
    <property type="project" value="TreeGrafter"/>
</dbReference>
<dbReference type="GO" id="GO:0042840">
    <property type="term" value="P:D-glucuronate catabolic process"/>
    <property type="evidence" value="ECO:0007669"/>
    <property type="project" value="TreeGrafter"/>
</dbReference>
<dbReference type="GO" id="GO:0045490">
    <property type="term" value="P:pectin catabolic process"/>
    <property type="evidence" value="ECO:0007669"/>
    <property type="project" value="UniProtKB-UniRule"/>
</dbReference>
<dbReference type="CDD" id="cd20491">
    <property type="entry name" value="cupin_KduI_C"/>
    <property type="match status" value="1"/>
</dbReference>
<dbReference type="CDD" id="cd20294">
    <property type="entry name" value="cupin_KduI_N"/>
    <property type="match status" value="1"/>
</dbReference>
<dbReference type="FunFam" id="2.60.120.10:FF:000018">
    <property type="entry name" value="4-deoxy-L-threo-5-hexosulose-uronate ketol-isomerase"/>
    <property type="match status" value="1"/>
</dbReference>
<dbReference type="FunFam" id="2.60.120.520:FF:000001">
    <property type="entry name" value="4-deoxy-L-threo-5-hexosulose-uronate ketol-isomerase"/>
    <property type="match status" value="1"/>
</dbReference>
<dbReference type="Gene3D" id="2.60.120.10">
    <property type="entry name" value="Jelly Rolls"/>
    <property type="match status" value="1"/>
</dbReference>
<dbReference type="Gene3D" id="2.60.120.520">
    <property type="entry name" value="pectin degrading enzyme 5-keto 4- deoxyuronate isomerase, domain 1"/>
    <property type="match status" value="1"/>
</dbReference>
<dbReference type="HAMAP" id="MF_00687">
    <property type="entry name" value="KduI"/>
    <property type="match status" value="1"/>
</dbReference>
<dbReference type="InterPro" id="IPR007045">
    <property type="entry name" value="KduI"/>
</dbReference>
<dbReference type="InterPro" id="IPR021120">
    <property type="entry name" value="KduI/IolB_isomerase"/>
</dbReference>
<dbReference type="InterPro" id="IPR027449">
    <property type="entry name" value="KduI_N"/>
</dbReference>
<dbReference type="InterPro" id="IPR014710">
    <property type="entry name" value="RmlC-like_jellyroll"/>
</dbReference>
<dbReference type="InterPro" id="IPR011051">
    <property type="entry name" value="RmlC_Cupin_sf"/>
</dbReference>
<dbReference type="NCBIfam" id="NF002091">
    <property type="entry name" value="PRK00924.1"/>
    <property type="match status" value="1"/>
</dbReference>
<dbReference type="PANTHER" id="PTHR38461">
    <property type="entry name" value="4-DEOXY-L-THREO-5-HEXOSULOSE-URONATE KETOL-ISOMERASE"/>
    <property type="match status" value="1"/>
</dbReference>
<dbReference type="PANTHER" id="PTHR38461:SF1">
    <property type="entry name" value="4-DEOXY-L-THREO-5-HEXOSULOSE-URONATE KETOL-ISOMERASE"/>
    <property type="match status" value="1"/>
</dbReference>
<dbReference type="Pfam" id="PF04962">
    <property type="entry name" value="KduI"/>
    <property type="match status" value="1"/>
</dbReference>
<dbReference type="PIRSF" id="PIRSF006625">
    <property type="entry name" value="KduI"/>
    <property type="match status" value="1"/>
</dbReference>
<dbReference type="SUPFAM" id="SSF51182">
    <property type="entry name" value="RmlC-like cupins"/>
    <property type="match status" value="1"/>
</dbReference>
<proteinExistence type="inferred from homology"/>
<sequence>MDVRQSIHSAHAKTLDTQQLRNEFLVEKVFVADEYTMVYSHIDRIIVGGIMPVAKTVSVGGEVGKQLGVSYFLERRELGVINIGGPGTITVDGQCFEIGHRDALYVGKGAQEVVFASVESSKPAKFYYNCAPAHMTYPTKKVTPADVSPVTLGDNLTSNRRTINKYFVPDVLETCQLSMGLTELDPGNLWNTMPCHTHERRMEVYFYFNMDEDACVFHMMGQPQETRHLVMHNEQAVISPSWSIHSGVGTKAYTFIWGMVGENQVFDDMDHVAVKDLR</sequence>
<comment type="function">
    <text evidence="1">Catalyzes the isomerization of 5-dehydro-4-deoxy-D-glucuronate to 3-deoxy-D-glycero-2,5-hexodiulosonate.</text>
</comment>
<comment type="catalytic activity">
    <reaction evidence="1">
        <text>5-dehydro-4-deoxy-D-glucuronate = 3-deoxy-D-glycero-2,5-hexodiulosonate</text>
        <dbReference type="Rhea" id="RHEA:23896"/>
        <dbReference type="ChEBI" id="CHEBI:17117"/>
        <dbReference type="ChEBI" id="CHEBI:29071"/>
        <dbReference type="EC" id="5.3.1.17"/>
    </reaction>
</comment>
<comment type="cofactor">
    <cofactor evidence="1">
        <name>Zn(2+)</name>
        <dbReference type="ChEBI" id="CHEBI:29105"/>
    </cofactor>
    <text evidence="1">Binds 1 zinc ion per subunit.</text>
</comment>
<comment type="pathway">
    <text evidence="1">Glycan metabolism; pectin degradation; 2-dehydro-3-deoxy-D-gluconate from pectin: step 4/5.</text>
</comment>
<comment type="similarity">
    <text evidence="1">Belongs to the KduI family.</text>
</comment>
<name>KDUI_ENT38</name>
<protein>
    <recommendedName>
        <fullName evidence="1">4-deoxy-L-threo-5-hexosulose-uronate ketol-isomerase</fullName>
        <ecNumber evidence="1">5.3.1.17</ecNumber>
    </recommendedName>
    <alternativeName>
        <fullName evidence="1">5-keto-4-deoxyuronate isomerase</fullName>
    </alternativeName>
    <alternativeName>
        <fullName evidence="1">DKI isomerase</fullName>
    </alternativeName>
</protein>
<gene>
    <name evidence="1" type="primary">kduI</name>
    <name type="ordered locus">Ent638_3296</name>
</gene>